<comment type="function">
    <text evidence="1">Specifically methylates the pseudouridine at position 1915 (m3Psi1915) in 23S rRNA.</text>
</comment>
<comment type="catalytic activity">
    <reaction evidence="1">
        <text>pseudouridine(1915) in 23S rRNA + S-adenosyl-L-methionine = N(3)-methylpseudouridine(1915) in 23S rRNA + S-adenosyl-L-homocysteine + H(+)</text>
        <dbReference type="Rhea" id="RHEA:42752"/>
        <dbReference type="Rhea" id="RHEA-COMP:10221"/>
        <dbReference type="Rhea" id="RHEA-COMP:10222"/>
        <dbReference type="ChEBI" id="CHEBI:15378"/>
        <dbReference type="ChEBI" id="CHEBI:57856"/>
        <dbReference type="ChEBI" id="CHEBI:59789"/>
        <dbReference type="ChEBI" id="CHEBI:65314"/>
        <dbReference type="ChEBI" id="CHEBI:74486"/>
        <dbReference type="EC" id="2.1.1.177"/>
    </reaction>
</comment>
<comment type="subunit">
    <text evidence="1">Homodimer.</text>
</comment>
<comment type="subcellular location">
    <subcellularLocation>
        <location evidence="1">Cytoplasm</location>
    </subcellularLocation>
</comment>
<comment type="similarity">
    <text evidence="1">Belongs to the RNA methyltransferase RlmH family.</text>
</comment>
<gene>
    <name evidence="1" type="primary">rlmH</name>
    <name type="ordered locus">RHE_CH04076</name>
</gene>
<reference key="1">
    <citation type="journal article" date="2006" name="Proc. Natl. Acad. Sci. U.S.A.">
        <title>The partitioned Rhizobium etli genome: genetic and metabolic redundancy in seven interacting replicons.</title>
        <authorList>
            <person name="Gonzalez V."/>
            <person name="Santamaria R.I."/>
            <person name="Bustos P."/>
            <person name="Hernandez-Gonzalez I."/>
            <person name="Medrano-Soto A."/>
            <person name="Moreno-Hagelsieb G."/>
            <person name="Janga S.C."/>
            <person name="Ramirez M.A."/>
            <person name="Jimenez-Jacinto V."/>
            <person name="Collado-Vides J."/>
            <person name="Davila G."/>
        </authorList>
    </citation>
    <scope>NUCLEOTIDE SEQUENCE [LARGE SCALE GENOMIC DNA]</scope>
    <source>
        <strain>ATCC 51251 / DSM 11541 / JCM 21823 / NBRC 15573 / CFN 42</strain>
    </source>
</reference>
<feature type="chain" id="PRO_0000260593" description="Ribosomal RNA large subunit methyltransferase H">
    <location>
        <begin position="1"/>
        <end position="160"/>
    </location>
</feature>
<feature type="binding site" evidence="1">
    <location>
        <position position="76"/>
    </location>
    <ligand>
        <name>S-adenosyl-L-methionine</name>
        <dbReference type="ChEBI" id="CHEBI:59789"/>
    </ligand>
</feature>
<feature type="binding site" evidence="1">
    <location>
        <position position="108"/>
    </location>
    <ligand>
        <name>S-adenosyl-L-methionine</name>
        <dbReference type="ChEBI" id="CHEBI:59789"/>
    </ligand>
</feature>
<feature type="binding site" evidence="1">
    <location>
        <begin position="127"/>
        <end position="132"/>
    </location>
    <ligand>
        <name>S-adenosyl-L-methionine</name>
        <dbReference type="ChEBI" id="CHEBI:59789"/>
    </ligand>
</feature>
<protein>
    <recommendedName>
        <fullName evidence="1">Ribosomal RNA large subunit methyltransferase H</fullName>
        <ecNumber evidence="1">2.1.1.177</ecNumber>
    </recommendedName>
    <alternativeName>
        <fullName evidence="1">23S rRNA (pseudouridine1915-N3)-methyltransferase</fullName>
    </alternativeName>
    <alternativeName>
        <fullName evidence="1">23S rRNA m3Psi1915 methyltransferase</fullName>
    </alternativeName>
    <alternativeName>
        <fullName evidence="1">rRNA (pseudouridine-N3-)-methyltransferase RlmH</fullName>
    </alternativeName>
</protein>
<organism>
    <name type="scientific">Rhizobium etli (strain ATCC 51251 / DSM 11541 / JCM 21823 / NBRC 15573 / CFN 42)</name>
    <dbReference type="NCBI Taxonomy" id="347834"/>
    <lineage>
        <taxon>Bacteria</taxon>
        <taxon>Pseudomonadati</taxon>
        <taxon>Pseudomonadota</taxon>
        <taxon>Alphaproteobacteria</taxon>
        <taxon>Hyphomicrobiales</taxon>
        <taxon>Rhizobiaceae</taxon>
        <taxon>Rhizobium/Agrobacterium group</taxon>
        <taxon>Rhizobium</taxon>
    </lineage>
</organism>
<evidence type="ECO:0000255" key="1">
    <source>
        <dbReference type="HAMAP-Rule" id="MF_00658"/>
    </source>
</evidence>
<name>RLMH_RHIEC</name>
<dbReference type="EC" id="2.1.1.177" evidence="1"/>
<dbReference type="EMBL" id="CP000133">
    <property type="protein sequence ID" value="ABC92819.1"/>
    <property type="molecule type" value="Genomic_DNA"/>
</dbReference>
<dbReference type="RefSeq" id="WP_011427259.1">
    <property type="nucleotide sequence ID" value="NC_007761.1"/>
</dbReference>
<dbReference type="SMR" id="Q2K2W7"/>
<dbReference type="KEGG" id="ret:RHE_CH04076"/>
<dbReference type="eggNOG" id="COG1576">
    <property type="taxonomic scope" value="Bacteria"/>
</dbReference>
<dbReference type="HOGENOM" id="CLU_100552_1_1_5"/>
<dbReference type="OrthoDB" id="9806643at2"/>
<dbReference type="Proteomes" id="UP000001936">
    <property type="component" value="Chromosome"/>
</dbReference>
<dbReference type="GO" id="GO:0005737">
    <property type="term" value="C:cytoplasm"/>
    <property type="evidence" value="ECO:0007669"/>
    <property type="project" value="UniProtKB-SubCell"/>
</dbReference>
<dbReference type="GO" id="GO:0070038">
    <property type="term" value="F:rRNA (pseudouridine-N3-)-methyltransferase activity"/>
    <property type="evidence" value="ECO:0007669"/>
    <property type="project" value="UniProtKB-UniRule"/>
</dbReference>
<dbReference type="CDD" id="cd18081">
    <property type="entry name" value="RlmH-like"/>
    <property type="match status" value="1"/>
</dbReference>
<dbReference type="Gene3D" id="3.40.1280.10">
    <property type="match status" value="1"/>
</dbReference>
<dbReference type="HAMAP" id="MF_00658">
    <property type="entry name" value="23SrRNA_methyltr_H"/>
    <property type="match status" value="1"/>
</dbReference>
<dbReference type="InterPro" id="IPR029028">
    <property type="entry name" value="Alpha/beta_knot_MTases"/>
</dbReference>
<dbReference type="InterPro" id="IPR003742">
    <property type="entry name" value="RlmH-like"/>
</dbReference>
<dbReference type="InterPro" id="IPR029026">
    <property type="entry name" value="tRNA_m1G_MTases_N"/>
</dbReference>
<dbReference type="NCBIfam" id="NF000989">
    <property type="entry name" value="PRK00103.2-3"/>
    <property type="match status" value="1"/>
</dbReference>
<dbReference type="PANTHER" id="PTHR33603">
    <property type="entry name" value="METHYLTRANSFERASE"/>
    <property type="match status" value="1"/>
</dbReference>
<dbReference type="PANTHER" id="PTHR33603:SF1">
    <property type="entry name" value="RIBOSOMAL RNA LARGE SUBUNIT METHYLTRANSFERASE H"/>
    <property type="match status" value="1"/>
</dbReference>
<dbReference type="Pfam" id="PF02590">
    <property type="entry name" value="SPOUT_MTase"/>
    <property type="match status" value="1"/>
</dbReference>
<dbReference type="PIRSF" id="PIRSF004505">
    <property type="entry name" value="MT_bac"/>
    <property type="match status" value="1"/>
</dbReference>
<dbReference type="SUPFAM" id="SSF75217">
    <property type="entry name" value="alpha/beta knot"/>
    <property type="match status" value="1"/>
</dbReference>
<accession>Q2K2W7</accession>
<sequence>MRIGLFAVGRLKSGPEKDLVARYLDRFAKAGSAVGLEFTRVAEVGESRASNAETRKREEAAMLLKSLAEGSVLILLDERGKALDSEAFAKLLGGYRDQGKRELTIAIGGADGLDPSLYDRADATLCLGKMTWPHQLVRTLIAEQLYRAVTILSGHPYHRV</sequence>
<proteinExistence type="inferred from homology"/>
<keyword id="KW-0963">Cytoplasm</keyword>
<keyword id="KW-0489">Methyltransferase</keyword>
<keyword id="KW-1185">Reference proteome</keyword>
<keyword id="KW-0698">rRNA processing</keyword>
<keyword id="KW-0949">S-adenosyl-L-methionine</keyword>
<keyword id="KW-0808">Transferase</keyword>